<sequence length="278" mass="31373">MVYNPTATFHKKTLTRMKTGLGSNGDILFIQTRALRDQLSSSFRFVYSNGPFFSDPGPGVLPVYKDAGPFRSWLRRPLQNRAQEPRLHMEAIRKCLEGTMKEDEQSGASGQWVGLMGFSQGARLAASVLFESQRRQNIQEKGGIVRGYEGDNIETKLWDQRWQFAVLFSGPAPLIAFCPENDHLSSQSTAEHDPMYRALDNVNCSGELHITKPTLHVIGVKDEWAPSQRELYEKYCSKESSTLVEWEGAHRIPIESSIVKDLCARILVMSKQADFVES</sequence>
<evidence type="ECO:0000250" key="1">
    <source>
        <dbReference type="UniProtKB" id="P38777"/>
    </source>
</evidence>
<evidence type="ECO:0000250" key="2">
    <source>
        <dbReference type="UniProtKB" id="Q5BEJ8"/>
    </source>
</evidence>
<evidence type="ECO:0000269" key="3">
    <source>
    </source>
</evidence>
<evidence type="ECO:0000269" key="4">
    <source>
    </source>
</evidence>
<evidence type="ECO:0000269" key="5">
    <source>
    </source>
</evidence>
<evidence type="ECO:0000269" key="6">
    <source>
    </source>
</evidence>
<evidence type="ECO:0000303" key="7">
    <source>
    </source>
</evidence>
<evidence type="ECO:0000305" key="8"/>
<organism>
    <name type="scientific">Cochliobolus heterostrophus (strain C4 / ATCC 48331 / race T)</name>
    <name type="common">Southern corn leaf blight fungus</name>
    <name type="synonym">Bipolaris maydis</name>
    <dbReference type="NCBI Taxonomy" id="665024"/>
    <lineage>
        <taxon>Eukaryota</taxon>
        <taxon>Fungi</taxon>
        <taxon>Dikarya</taxon>
        <taxon>Ascomycota</taxon>
        <taxon>Pezizomycotina</taxon>
        <taxon>Dothideomycetes</taxon>
        <taxon>Pleosporomycetidae</taxon>
        <taxon>Pleosporales</taxon>
        <taxon>Pleosporineae</taxon>
        <taxon>Pleosporaceae</taxon>
        <taxon>Bipolaris</taxon>
    </lineage>
</organism>
<dbReference type="EC" id="3.1.2.-" evidence="2"/>
<dbReference type="EMBL" id="FJ943499">
    <property type="protein sequence ID" value="ADB23431.1"/>
    <property type="molecule type" value="Genomic_DNA"/>
</dbReference>
<dbReference type="EMBL" id="KB733545">
    <property type="protein sequence ID" value="ENH98547.1"/>
    <property type="molecule type" value="Genomic_DNA"/>
</dbReference>
<dbReference type="RefSeq" id="XP_014072457.1">
    <property type="nucleotide sequence ID" value="XM_014216982.1"/>
</dbReference>
<dbReference type="SMR" id="N4WQZ8"/>
<dbReference type="ESTHER" id="coch4-tox9">
    <property type="family name" value="FSH1"/>
</dbReference>
<dbReference type="GeneID" id="25839392"/>
<dbReference type="HOGENOM" id="CLU_051938_0_2_1"/>
<dbReference type="OrthoDB" id="414698at2759"/>
<dbReference type="PHI-base" id="PHI:2838"/>
<dbReference type="Proteomes" id="UP000012338">
    <property type="component" value="Unassembled WGS sequence"/>
</dbReference>
<dbReference type="GO" id="GO:0005737">
    <property type="term" value="C:cytoplasm"/>
    <property type="evidence" value="ECO:0007669"/>
    <property type="project" value="TreeGrafter"/>
</dbReference>
<dbReference type="GO" id="GO:0005634">
    <property type="term" value="C:nucleus"/>
    <property type="evidence" value="ECO:0007669"/>
    <property type="project" value="TreeGrafter"/>
</dbReference>
<dbReference type="GO" id="GO:0016787">
    <property type="term" value="F:hydrolase activity"/>
    <property type="evidence" value="ECO:0007669"/>
    <property type="project" value="UniProtKB-KW"/>
</dbReference>
<dbReference type="GO" id="GO:0044550">
    <property type="term" value="P:secondary metabolite biosynthetic process"/>
    <property type="evidence" value="ECO:0007669"/>
    <property type="project" value="TreeGrafter"/>
</dbReference>
<dbReference type="Gene3D" id="3.40.50.1820">
    <property type="entry name" value="alpha/beta hydrolase"/>
    <property type="match status" value="1"/>
</dbReference>
<dbReference type="InterPro" id="IPR029058">
    <property type="entry name" value="AB_hydrolase_fold"/>
</dbReference>
<dbReference type="InterPro" id="IPR005645">
    <property type="entry name" value="FSH-like_dom"/>
</dbReference>
<dbReference type="InterPro" id="IPR050593">
    <property type="entry name" value="LovG"/>
</dbReference>
<dbReference type="PANTHER" id="PTHR48070:SF3">
    <property type="entry name" value="ESTERASE DBAE-RELATED"/>
    <property type="match status" value="1"/>
</dbReference>
<dbReference type="PANTHER" id="PTHR48070">
    <property type="entry name" value="ESTERASE OVCA2"/>
    <property type="match status" value="1"/>
</dbReference>
<dbReference type="Pfam" id="PF03959">
    <property type="entry name" value="FSH1"/>
    <property type="match status" value="1"/>
</dbReference>
<dbReference type="SUPFAM" id="SSF53474">
    <property type="entry name" value="alpha/beta-Hydrolases"/>
    <property type="match status" value="1"/>
</dbReference>
<reference key="1">
    <citation type="journal article" date="2010" name="Mol. Plant Microbe Interact.">
        <title>Six new genes required for production of T-toxin, a polyketide determinant of high virulence of Cochliobolus heterostrophus to maize.</title>
        <authorList>
            <person name="Inderbitzin P."/>
            <person name="Asvarak T."/>
            <person name="Turgeon B.G."/>
        </authorList>
    </citation>
    <scope>NUCLEOTIDE SEQUENCE [GENOMIC DNA]</scope>
    <scope>FUNCTION</scope>
    <scope>DISRUPTION PHENOTYPE</scope>
    <source>
        <strain>C4 / ATCC 48331 / race T</strain>
    </source>
</reference>
<reference key="2">
    <citation type="journal article" date="2012" name="PLoS Pathog.">
        <title>Diverse lifestyles and strategies of plant pathogenesis encoded in the genomes of eighteen Dothideomycetes fungi.</title>
        <authorList>
            <person name="Ohm R.A."/>
            <person name="Feau N."/>
            <person name="Henrissat B."/>
            <person name="Schoch C.L."/>
            <person name="Horwitz B.A."/>
            <person name="Barry K.W."/>
            <person name="Condon B.J."/>
            <person name="Copeland A.C."/>
            <person name="Dhillon B."/>
            <person name="Glaser F."/>
            <person name="Hesse C.N."/>
            <person name="Kosti I."/>
            <person name="LaButti K."/>
            <person name="Lindquist E.A."/>
            <person name="Lucas S."/>
            <person name="Salamov A.A."/>
            <person name="Bradshaw R.E."/>
            <person name="Ciuffetti L."/>
            <person name="Hamelin R.C."/>
            <person name="Kema G.H.J."/>
            <person name="Lawrence C."/>
            <person name="Scott J.A."/>
            <person name="Spatafora J.W."/>
            <person name="Turgeon B.G."/>
            <person name="de Wit P.J.G.M."/>
            <person name="Zhong S."/>
            <person name="Goodwin S.B."/>
            <person name="Grigoriev I.V."/>
        </authorList>
    </citation>
    <scope>NUCLEOTIDE SEQUENCE [LARGE SCALE GENOMIC DNA]</scope>
    <source>
        <strain>C4 / ATCC 48331 / race T</strain>
    </source>
</reference>
<reference key="3">
    <citation type="journal article" date="2013" name="PLoS Genet.">
        <title>Comparative genome structure, secondary metabolite, and effector coding capacity across Cochliobolus pathogens.</title>
        <authorList>
            <person name="Condon B.J."/>
            <person name="Leng Y."/>
            <person name="Wu D."/>
            <person name="Bushley K.E."/>
            <person name="Ohm R.A."/>
            <person name="Otillar R."/>
            <person name="Martin J."/>
            <person name="Schackwitz W."/>
            <person name="Grimwood J."/>
            <person name="MohdZainudin N."/>
            <person name="Xue C."/>
            <person name="Wang R."/>
            <person name="Manning V.A."/>
            <person name="Dhillon B."/>
            <person name="Tu Z.J."/>
            <person name="Steffenson B.J."/>
            <person name="Salamov A."/>
            <person name="Sun H."/>
            <person name="Lowry S."/>
            <person name="LaButti K."/>
            <person name="Han J."/>
            <person name="Copeland A."/>
            <person name="Lindquist E."/>
            <person name="Barry K."/>
            <person name="Schmutz J."/>
            <person name="Baker S.E."/>
            <person name="Ciuffetti L.M."/>
            <person name="Grigoriev I.V."/>
            <person name="Zhong S."/>
            <person name="Turgeon B.G."/>
        </authorList>
    </citation>
    <scope>NUCLEOTIDE SEQUENCE [LARGE SCALE GENOMIC DNA]</scope>
    <source>
        <strain>C4 / ATCC 48331 / race T</strain>
    </source>
</reference>
<reference key="4">
    <citation type="journal article" date="1996" name="Plant Cell">
        <title>A polyketide synthase is required for fungal virulence and production of the polyketide T-toxin.</title>
        <authorList>
            <person name="Yang G."/>
            <person name="Rose M.S."/>
            <person name="Turgeon B.G."/>
            <person name="Yoder O.C."/>
        </authorList>
    </citation>
    <scope>FUNCTION</scope>
    <source>
        <strain>C4 / ATCC 48331 / race T</strain>
    </source>
</reference>
<reference key="5">
    <citation type="journal article" date="2002" name="Mol. Plant Microbe Interact.">
        <title>A decarboxylase encoded at the Cochliobolus heterostrophus translocation-associated Tox1B locus is required for polyketide (T-toxin) biosynthesis and high virulence on T-cytoplasm maize.</title>
        <authorList>
            <person name="Rose M.S."/>
            <person name="Yun S.-H."/>
            <person name="Asvarak T."/>
            <person name="Lu S.-W."/>
            <person name="Yoder O.C."/>
            <person name="Turgeon B.G."/>
        </authorList>
    </citation>
    <scope>FUNCTION</scope>
    <source>
        <strain>C4 / ATCC 48331 / race T</strain>
    </source>
</reference>
<reference key="6">
    <citation type="journal article" date="2006" name="Mol. Plant Microbe Interact.">
        <title>Two polyketide synthase-encoding genes are required for biosynthesis of the polyketide virulence factor, T-toxin, by Cochliobolus heterostrophus.</title>
        <authorList>
            <person name="Baker S.E."/>
            <person name="Kroken S."/>
            <person name="Inderbitzin P."/>
            <person name="Asvarak T."/>
            <person name="Li B.Y."/>
            <person name="Shi L."/>
            <person name="Yoder O.C."/>
            <person name="Turgeon B.G."/>
        </authorList>
    </citation>
    <scope>FUNCTION</scope>
</reference>
<name>TOX9_COCH4</name>
<accession>N4WQZ8</accession>
<accession>D2SZX8</accession>
<keyword id="KW-0378">Hydrolase</keyword>
<proteinExistence type="inferred from homology"/>
<feature type="chain" id="PRO_0000437646" description="Probable esterase TOX9">
    <location>
        <begin position="1"/>
        <end position="278"/>
    </location>
</feature>
<feature type="active site" description="Charge relay system" evidence="1">
    <location>
        <position position="119"/>
    </location>
</feature>
<feature type="active site" description="Charge relay system" evidence="1">
    <location>
        <position position="222"/>
    </location>
</feature>
<feature type="active site" description="Charge relay system" evidence="1">
    <location>
        <position position="250"/>
    </location>
</feature>
<comment type="function">
    <text evidence="3 4 5 6">Probable esterase; part of the Tox1A locus, one of the 2 loci that mediate the biosynthesis of T-toxin, a family of linear polyketides 37 to 45 carbons in length, of which the major component is 41 carbons, and which leads to high virulence to maize (PubMed:20192833, PubMed:8953776). One of the PKSs (PKS1 or PKS2) could synthesize a precursor, used subsequently by the other PKS as starter unit, to add additional carbons (PubMed:16529376). Variability in the length of the final carbon backbone C35-47 could be achieved by varying the number of condensation cycles, or use of different starter or extender units or might be due to decarboxylation of the penultimate product, catalyzed by DEC1 (PubMed:12236595). Additional proteins are required for the biosynthesis of T-toxin, including oxidoreductases RED1, RED2, RED3, LAM1 and OXI1, as well as esterase TOX9 (PubMed:20192833).</text>
</comment>
<comment type="pathway">
    <text evidence="5">Mycotoxin biosynthesis.</text>
</comment>
<comment type="disruption phenotype">
    <text evidence="5">Leads to the loss of T-Toxin production, resulting in low virulence for maize (PubMed:20192833).</text>
</comment>
<comment type="similarity">
    <text evidence="8">Belongs to the LovG family.</text>
</comment>
<protein>
    <recommendedName>
        <fullName evidence="8">Probable esterase TOX9</fullName>
        <ecNumber evidence="2">3.1.2.-</ecNumber>
    </recommendedName>
    <alternativeName>
        <fullName evidence="7">T-toxin biosynthesis protein TOX9</fullName>
    </alternativeName>
</protein>
<gene>
    <name evidence="7" type="primary">TOX9</name>
    <name type="ORF">COCC4DRAFT_155492</name>
</gene>